<sequence length="182" mass="19164">MASRGVNKVILVGNLGQDPEVRYMPNGGAVANITLATSESWRDKQTGEQKEKTEWHRVVLFGKLAEVAGEYLRKGSQVYIEGALQTRKWQDQSGQERYTTEVVVNVGGTMQMLGGRQGGGAPAGGGAAPQDGGAQGGWGQPQQPQGGNQFSGGQASRPAQPAPAAPQGGNEPPMDFDDDIPF</sequence>
<name>SSB_YERPE</name>
<gene>
    <name type="primary">ssb</name>
    <name type="ordered locus">YPO0325</name>
    <name type="ordered locus">y0582</name>
    <name type="ordered locus">YP_0480</name>
</gene>
<feature type="chain" id="PRO_0000096146" description="Single-stranded DNA-binding protein">
    <location>
        <begin position="1"/>
        <end position="182"/>
    </location>
</feature>
<feature type="domain" description="SSB" evidence="1">
    <location>
        <begin position="6"/>
        <end position="111"/>
    </location>
</feature>
<feature type="DNA-binding region" evidence="1">
    <location>
        <begin position="55"/>
        <end position="61"/>
    </location>
</feature>
<feature type="region of interest" description="Disordered" evidence="2">
    <location>
        <begin position="113"/>
        <end position="182"/>
    </location>
</feature>
<feature type="short sequence motif" description="Important for interaction with partner proteins" evidence="1">
    <location>
        <begin position="177"/>
        <end position="182"/>
    </location>
</feature>
<feature type="compositionally biased region" description="Gly residues" evidence="2">
    <location>
        <begin position="115"/>
        <end position="139"/>
    </location>
</feature>
<feature type="compositionally biased region" description="Low complexity" evidence="2">
    <location>
        <begin position="140"/>
        <end position="159"/>
    </location>
</feature>
<protein>
    <recommendedName>
        <fullName evidence="1">Single-stranded DNA-binding protein</fullName>
        <shortName evidence="1">SSB</shortName>
    </recommendedName>
</protein>
<evidence type="ECO:0000255" key="1">
    <source>
        <dbReference type="HAMAP-Rule" id="MF_00984"/>
    </source>
</evidence>
<evidence type="ECO:0000256" key="2">
    <source>
        <dbReference type="SAM" id="MobiDB-lite"/>
    </source>
</evidence>
<reference key="1">
    <citation type="journal article" date="2001" name="Nature">
        <title>Genome sequence of Yersinia pestis, the causative agent of plague.</title>
        <authorList>
            <person name="Parkhill J."/>
            <person name="Wren B.W."/>
            <person name="Thomson N.R."/>
            <person name="Titball R.W."/>
            <person name="Holden M.T.G."/>
            <person name="Prentice M.B."/>
            <person name="Sebaihia M."/>
            <person name="James K.D."/>
            <person name="Churcher C.M."/>
            <person name="Mungall K.L."/>
            <person name="Baker S."/>
            <person name="Basham D."/>
            <person name="Bentley S.D."/>
            <person name="Brooks K."/>
            <person name="Cerdeno-Tarraga A.-M."/>
            <person name="Chillingworth T."/>
            <person name="Cronin A."/>
            <person name="Davies R.M."/>
            <person name="Davis P."/>
            <person name="Dougan G."/>
            <person name="Feltwell T."/>
            <person name="Hamlin N."/>
            <person name="Holroyd S."/>
            <person name="Jagels K."/>
            <person name="Karlyshev A.V."/>
            <person name="Leather S."/>
            <person name="Moule S."/>
            <person name="Oyston P.C.F."/>
            <person name="Quail M.A."/>
            <person name="Rutherford K.M."/>
            <person name="Simmonds M."/>
            <person name="Skelton J."/>
            <person name="Stevens K."/>
            <person name="Whitehead S."/>
            <person name="Barrell B.G."/>
        </authorList>
    </citation>
    <scope>NUCLEOTIDE SEQUENCE [LARGE SCALE GENOMIC DNA]</scope>
    <source>
        <strain>CO-92 / Biovar Orientalis</strain>
    </source>
</reference>
<reference key="2">
    <citation type="journal article" date="2002" name="J. Bacteriol.">
        <title>Genome sequence of Yersinia pestis KIM.</title>
        <authorList>
            <person name="Deng W."/>
            <person name="Burland V."/>
            <person name="Plunkett G. III"/>
            <person name="Boutin A."/>
            <person name="Mayhew G.F."/>
            <person name="Liss P."/>
            <person name="Perna N.T."/>
            <person name="Rose D.J."/>
            <person name="Mau B."/>
            <person name="Zhou S."/>
            <person name="Schwartz D.C."/>
            <person name="Fetherston J.D."/>
            <person name="Lindler L.E."/>
            <person name="Brubaker R.R."/>
            <person name="Plano G.V."/>
            <person name="Straley S.C."/>
            <person name="McDonough K.A."/>
            <person name="Nilles M.L."/>
            <person name="Matson J.S."/>
            <person name="Blattner F.R."/>
            <person name="Perry R.D."/>
        </authorList>
    </citation>
    <scope>NUCLEOTIDE SEQUENCE [LARGE SCALE GENOMIC DNA]</scope>
    <source>
        <strain>KIM10+ / Biovar Mediaevalis</strain>
    </source>
</reference>
<reference key="3">
    <citation type="journal article" date="2004" name="DNA Res.">
        <title>Complete genome sequence of Yersinia pestis strain 91001, an isolate avirulent to humans.</title>
        <authorList>
            <person name="Song Y."/>
            <person name="Tong Z."/>
            <person name="Wang J."/>
            <person name="Wang L."/>
            <person name="Guo Z."/>
            <person name="Han Y."/>
            <person name="Zhang J."/>
            <person name="Pei D."/>
            <person name="Zhou D."/>
            <person name="Qin H."/>
            <person name="Pang X."/>
            <person name="Han Y."/>
            <person name="Zhai J."/>
            <person name="Li M."/>
            <person name="Cui B."/>
            <person name="Qi Z."/>
            <person name="Jin L."/>
            <person name="Dai R."/>
            <person name="Chen F."/>
            <person name="Li S."/>
            <person name="Ye C."/>
            <person name="Du Z."/>
            <person name="Lin W."/>
            <person name="Wang J."/>
            <person name="Yu J."/>
            <person name="Yang H."/>
            <person name="Wang J."/>
            <person name="Huang P."/>
            <person name="Yang R."/>
        </authorList>
    </citation>
    <scope>NUCLEOTIDE SEQUENCE [LARGE SCALE GENOMIC DNA]</scope>
    <source>
        <strain>91001 / Biovar Mediaevalis</strain>
    </source>
</reference>
<accession>Q8ZJ06</accession>
<accession>Q0WJY3</accession>
<dbReference type="EMBL" id="AL590842">
    <property type="protein sequence ID" value="CAL19009.1"/>
    <property type="molecule type" value="Genomic_DNA"/>
</dbReference>
<dbReference type="EMBL" id="AE009952">
    <property type="protein sequence ID" value="AAM84170.1"/>
    <property type="molecule type" value="Genomic_DNA"/>
</dbReference>
<dbReference type="EMBL" id="AE017042">
    <property type="protein sequence ID" value="AAS60750.1"/>
    <property type="molecule type" value="Genomic_DNA"/>
</dbReference>
<dbReference type="PIR" id="AG0040">
    <property type="entry name" value="AG0040"/>
</dbReference>
<dbReference type="RefSeq" id="YP_002345405.1">
    <property type="nucleotide sequence ID" value="NC_003143.1"/>
</dbReference>
<dbReference type="SMR" id="Q8ZJ06"/>
<dbReference type="STRING" id="214092.YPO0325"/>
<dbReference type="PaxDb" id="214092-YPO0325"/>
<dbReference type="EnsemblBacteria" id="AAS60750">
    <property type="protein sequence ID" value="AAS60750"/>
    <property type="gene ID" value="YP_0480"/>
</dbReference>
<dbReference type="KEGG" id="ype:YPO0325"/>
<dbReference type="KEGG" id="ypk:y0582"/>
<dbReference type="KEGG" id="ypm:YP_0480"/>
<dbReference type="PATRIC" id="fig|1028802.3.peg.85"/>
<dbReference type="eggNOG" id="COG0629">
    <property type="taxonomic scope" value="Bacteria"/>
</dbReference>
<dbReference type="HOGENOM" id="CLU_078758_0_2_6"/>
<dbReference type="OMA" id="FLRCNVW"/>
<dbReference type="OrthoDB" id="9809878at2"/>
<dbReference type="Proteomes" id="UP000000815">
    <property type="component" value="Chromosome"/>
</dbReference>
<dbReference type="Proteomes" id="UP000001019">
    <property type="component" value="Chromosome"/>
</dbReference>
<dbReference type="Proteomes" id="UP000002490">
    <property type="component" value="Chromosome"/>
</dbReference>
<dbReference type="GO" id="GO:0009295">
    <property type="term" value="C:nucleoid"/>
    <property type="evidence" value="ECO:0000318"/>
    <property type="project" value="GO_Central"/>
</dbReference>
<dbReference type="GO" id="GO:0008047">
    <property type="term" value="F:enzyme activator activity"/>
    <property type="evidence" value="ECO:0000318"/>
    <property type="project" value="GO_Central"/>
</dbReference>
<dbReference type="GO" id="GO:0003697">
    <property type="term" value="F:single-stranded DNA binding"/>
    <property type="evidence" value="ECO:0000318"/>
    <property type="project" value="GO_Central"/>
</dbReference>
<dbReference type="GO" id="GO:0006310">
    <property type="term" value="P:DNA recombination"/>
    <property type="evidence" value="ECO:0007669"/>
    <property type="project" value="UniProtKB-UniRule"/>
</dbReference>
<dbReference type="GO" id="GO:0006281">
    <property type="term" value="P:DNA repair"/>
    <property type="evidence" value="ECO:0007669"/>
    <property type="project" value="UniProtKB-UniRule"/>
</dbReference>
<dbReference type="GO" id="GO:0006260">
    <property type="term" value="P:DNA replication"/>
    <property type="evidence" value="ECO:0000318"/>
    <property type="project" value="GO_Central"/>
</dbReference>
<dbReference type="CDD" id="cd04496">
    <property type="entry name" value="SSB_OBF"/>
    <property type="match status" value="1"/>
</dbReference>
<dbReference type="FunFam" id="2.40.50.140:FF:000065">
    <property type="entry name" value="Single-stranded DNA-binding protein"/>
    <property type="match status" value="1"/>
</dbReference>
<dbReference type="Gene3D" id="2.40.50.140">
    <property type="entry name" value="Nucleic acid-binding proteins"/>
    <property type="match status" value="1"/>
</dbReference>
<dbReference type="HAMAP" id="MF_00984">
    <property type="entry name" value="SSB"/>
    <property type="match status" value="1"/>
</dbReference>
<dbReference type="InterPro" id="IPR012340">
    <property type="entry name" value="NA-bd_OB-fold"/>
</dbReference>
<dbReference type="InterPro" id="IPR000424">
    <property type="entry name" value="Primosome_PriB/ssb"/>
</dbReference>
<dbReference type="InterPro" id="IPR011344">
    <property type="entry name" value="ssDNA-bd"/>
</dbReference>
<dbReference type="NCBIfam" id="NF006533">
    <property type="entry name" value="PRK09010.1"/>
    <property type="match status" value="1"/>
</dbReference>
<dbReference type="NCBIfam" id="TIGR00621">
    <property type="entry name" value="ssb"/>
    <property type="match status" value="1"/>
</dbReference>
<dbReference type="PANTHER" id="PTHR10302">
    <property type="entry name" value="SINGLE-STRANDED DNA-BINDING PROTEIN"/>
    <property type="match status" value="1"/>
</dbReference>
<dbReference type="PANTHER" id="PTHR10302:SF27">
    <property type="entry name" value="SINGLE-STRANDED DNA-BINDING PROTEIN"/>
    <property type="match status" value="1"/>
</dbReference>
<dbReference type="Pfam" id="PF00436">
    <property type="entry name" value="SSB"/>
    <property type="match status" value="1"/>
</dbReference>
<dbReference type="PIRSF" id="PIRSF002070">
    <property type="entry name" value="SSB"/>
    <property type="match status" value="1"/>
</dbReference>
<dbReference type="SUPFAM" id="SSF50249">
    <property type="entry name" value="Nucleic acid-binding proteins"/>
    <property type="match status" value="1"/>
</dbReference>
<dbReference type="PROSITE" id="PS50935">
    <property type="entry name" value="SSB"/>
    <property type="match status" value="1"/>
</dbReference>
<organism>
    <name type="scientific">Yersinia pestis</name>
    <dbReference type="NCBI Taxonomy" id="632"/>
    <lineage>
        <taxon>Bacteria</taxon>
        <taxon>Pseudomonadati</taxon>
        <taxon>Pseudomonadota</taxon>
        <taxon>Gammaproteobacteria</taxon>
        <taxon>Enterobacterales</taxon>
        <taxon>Yersiniaceae</taxon>
        <taxon>Yersinia</taxon>
    </lineage>
</organism>
<keyword id="KW-0227">DNA damage</keyword>
<keyword id="KW-0233">DNA recombination</keyword>
<keyword id="KW-0234">DNA repair</keyword>
<keyword id="KW-0235">DNA replication</keyword>
<keyword id="KW-0238">DNA-binding</keyword>
<keyword id="KW-1185">Reference proteome</keyword>
<proteinExistence type="inferred from homology"/>
<comment type="function">
    <text evidence="1">Plays an important role in DNA replication, recombination and repair. Binds to ssDNA and to an array of partner proteins to recruit them to their sites of action during DNA metabolism.</text>
</comment>
<comment type="subunit">
    <text evidence="1">Homotetramer.</text>
</comment>